<organism>
    <name type="scientific">Bacillus cereus (strain ATCC 10987 / NRS 248)</name>
    <dbReference type="NCBI Taxonomy" id="222523"/>
    <lineage>
        <taxon>Bacteria</taxon>
        <taxon>Bacillati</taxon>
        <taxon>Bacillota</taxon>
        <taxon>Bacilli</taxon>
        <taxon>Bacillales</taxon>
        <taxon>Bacillaceae</taxon>
        <taxon>Bacillus</taxon>
        <taxon>Bacillus cereus group</taxon>
    </lineage>
</organism>
<sequence length="166" mass="17529">MHRIDPSKLELEERVVTINRVAKVVKGGRRFRFAALVVVGDKNGHVGFGTGKAQEVPDAIRKAIEDAKKNLIAVPLVGTTIPHTINGHFGAGEVFLKPAAEGTGVIAGGPVRAVLELAGVQDILSKSLGSNTPINMIRATVNGLSELKRAEDVAKLRGKSVEELLG</sequence>
<dbReference type="EMBL" id="AE017194">
    <property type="protein sequence ID" value="AAS39063.1"/>
    <property type="molecule type" value="Genomic_DNA"/>
</dbReference>
<dbReference type="SMR" id="Q73F79"/>
<dbReference type="KEGG" id="bca:BCE_0127"/>
<dbReference type="HOGENOM" id="CLU_065898_2_2_9"/>
<dbReference type="Proteomes" id="UP000002527">
    <property type="component" value="Chromosome"/>
</dbReference>
<dbReference type="GO" id="GO:0015935">
    <property type="term" value="C:small ribosomal subunit"/>
    <property type="evidence" value="ECO:0007669"/>
    <property type="project" value="InterPro"/>
</dbReference>
<dbReference type="GO" id="GO:0019843">
    <property type="term" value="F:rRNA binding"/>
    <property type="evidence" value="ECO:0007669"/>
    <property type="project" value="UniProtKB-UniRule"/>
</dbReference>
<dbReference type="GO" id="GO:0003735">
    <property type="term" value="F:structural constituent of ribosome"/>
    <property type="evidence" value="ECO:0007669"/>
    <property type="project" value="InterPro"/>
</dbReference>
<dbReference type="GO" id="GO:0006412">
    <property type="term" value="P:translation"/>
    <property type="evidence" value="ECO:0007669"/>
    <property type="project" value="UniProtKB-UniRule"/>
</dbReference>
<dbReference type="FunFam" id="3.30.160.20:FF:000001">
    <property type="entry name" value="30S ribosomal protein S5"/>
    <property type="match status" value="1"/>
</dbReference>
<dbReference type="FunFam" id="3.30.230.10:FF:000002">
    <property type="entry name" value="30S ribosomal protein S5"/>
    <property type="match status" value="1"/>
</dbReference>
<dbReference type="Gene3D" id="3.30.160.20">
    <property type="match status" value="1"/>
</dbReference>
<dbReference type="Gene3D" id="3.30.230.10">
    <property type="match status" value="1"/>
</dbReference>
<dbReference type="HAMAP" id="MF_01307_B">
    <property type="entry name" value="Ribosomal_uS5_B"/>
    <property type="match status" value="1"/>
</dbReference>
<dbReference type="InterPro" id="IPR020568">
    <property type="entry name" value="Ribosomal_Su5_D2-typ_SF"/>
</dbReference>
<dbReference type="InterPro" id="IPR000851">
    <property type="entry name" value="Ribosomal_uS5"/>
</dbReference>
<dbReference type="InterPro" id="IPR005712">
    <property type="entry name" value="Ribosomal_uS5_bac-type"/>
</dbReference>
<dbReference type="InterPro" id="IPR005324">
    <property type="entry name" value="Ribosomal_uS5_C"/>
</dbReference>
<dbReference type="InterPro" id="IPR013810">
    <property type="entry name" value="Ribosomal_uS5_N"/>
</dbReference>
<dbReference type="InterPro" id="IPR018192">
    <property type="entry name" value="Ribosomal_uS5_N_CS"/>
</dbReference>
<dbReference type="InterPro" id="IPR014721">
    <property type="entry name" value="Ribsml_uS5_D2-typ_fold_subgr"/>
</dbReference>
<dbReference type="NCBIfam" id="TIGR01021">
    <property type="entry name" value="rpsE_bact"/>
    <property type="match status" value="1"/>
</dbReference>
<dbReference type="PANTHER" id="PTHR48277">
    <property type="entry name" value="MITOCHONDRIAL RIBOSOMAL PROTEIN S5"/>
    <property type="match status" value="1"/>
</dbReference>
<dbReference type="PANTHER" id="PTHR48277:SF1">
    <property type="entry name" value="MITOCHONDRIAL RIBOSOMAL PROTEIN S5"/>
    <property type="match status" value="1"/>
</dbReference>
<dbReference type="Pfam" id="PF00333">
    <property type="entry name" value="Ribosomal_S5"/>
    <property type="match status" value="1"/>
</dbReference>
<dbReference type="Pfam" id="PF03719">
    <property type="entry name" value="Ribosomal_S5_C"/>
    <property type="match status" value="1"/>
</dbReference>
<dbReference type="SUPFAM" id="SSF54768">
    <property type="entry name" value="dsRNA-binding domain-like"/>
    <property type="match status" value="1"/>
</dbReference>
<dbReference type="SUPFAM" id="SSF54211">
    <property type="entry name" value="Ribosomal protein S5 domain 2-like"/>
    <property type="match status" value="1"/>
</dbReference>
<dbReference type="PROSITE" id="PS00585">
    <property type="entry name" value="RIBOSOMAL_S5"/>
    <property type="match status" value="1"/>
</dbReference>
<dbReference type="PROSITE" id="PS50881">
    <property type="entry name" value="S5_DSRBD"/>
    <property type="match status" value="1"/>
</dbReference>
<name>RS5_BACC1</name>
<comment type="function">
    <text evidence="1">With S4 and S12 plays an important role in translational accuracy.</text>
</comment>
<comment type="function">
    <text evidence="1">Located at the back of the 30S subunit body where it stabilizes the conformation of the head with respect to the body.</text>
</comment>
<comment type="subunit">
    <text evidence="1">Part of the 30S ribosomal subunit. Contacts proteins S4 and S8.</text>
</comment>
<comment type="domain">
    <text>The N-terminal domain interacts with the head of the 30S subunit; the C-terminal domain interacts with the body and contacts protein S4. The interaction surface between S4 and S5 is involved in control of translational fidelity.</text>
</comment>
<comment type="similarity">
    <text evidence="1">Belongs to the universal ribosomal protein uS5 family.</text>
</comment>
<reference key="1">
    <citation type="journal article" date="2004" name="Nucleic Acids Res.">
        <title>The genome sequence of Bacillus cereus ATCC 10987 reveals metabolic adaptations and a large plasmid related to Bacillus anthracis pXO1.</title>
        <authorList>
            <person name="Rasko D.A."/>
            <person name="Ravel J."/>
            <person name="Oekstad O.A."/>
            <person name="Helgason E."/>
            <person name="Cer R.Z."/>
            <person name="Jiang L."/>
            <person name="Shores K.A."/>
            <person name="Fouts D.E."/>
            <person name="Tourasse N.J."/>
            <person name="Angiuoli S.V."/>
            <person name="Kolonay J.F."/>
            <person name="Nelson W.C."/>
            <person name="Kolstoe A.-B."/>
            <person name="Fraser C.M."/>
            <person name="Read T.D."/>
        </authorList>
    </citation>
    <scope>NUCLEOTIDE SEQUENCE [LARGE SCALE GENOMIC DNA]</scope>
    <source>
        <strain>ATCC 10987 / NRS 248</strain>
    </source>
</reference>
<protein>
    <recommendedName>
        <fullName evidence="1">Small ribosomal subunit protein uS5</fullName>
    </recommendedName>
    <alternativeName>
        <fullName evidence="2">30S ribosomal protein S5</fullName>
    </alternativeName>
</protein>
<proteinExistence type="inferred from homology"/>
<keyword id="KW-0687">Ribonucleoprotein</keyword>
<keyword id="KW-0689">Ribosomal protein</keyword>
<keyword id="KW-0694">RNA-binding</keyword>
<keyword id="KW-0699">rRNA-binding</keyword>
<feature type="chain" id="PRO_0000131461" description="Small ribosomal subunit protein uS5">
    <location>
        <begin position="1"/>
        <end position="166"/>
    </location>
</feature>
<feature type="domain" description="S5 DRBM" evidence="1">
    <location>
        <begin position="11"/>
        <end position="74"/>
    </location>
</feature>
<gene>
    <name evidence="1" type="primary">rpsE</name>
    <name type="ordered locus">BCE_0127</name>
</gene>
<evidence type="ECO:0000255" key="1">
    <source>
        <dbReference type="HAMAP-Rule" id="MF_01307"/>
    </source>
</evidence>
<evidence type="ECO:0000305" key="2"/>
<accession>Q73F79</accession>